<reference key="1">
    <citation type="journal article" date="2005" name="Nucleic Acids Res.">
        <title>Genomic blueprint of Hahella chejuensis, a marine microbe producing an algicidal agent.</title>
        <authorList>
            <person name="Jeong H."/>
            <person name="Yim J.H."/>
            <person name="Lee C."/>
            <person name="Choi S.-H."/>
            <person name="Park Y.K."/>
            <person name="Yoon S.H."/>
            <person name="Hur C.-G."/>
            <person name="Kang H.-Y."/>
            <person name="Kim D."/>
            <person name="Lee H.H."/>
            <person name="Park K.H."/>
            <person name="Park S.-H."/>
            <person name="Park H.-S."/>
            <person name="Lee H.K."/>
            <person name="Oh T.K."/>
            <person name="Kim J.F."/>
        </authorList>
    </citation>
    <scope>NUCLEOTIDE SEQUENCE [LARGE SCALE GENOMIC DNA]</scope>
    <source>
        <strain>KCTC 2396</strain>
    </source>
</reference>
<accession>Q2SCJ1</accession>
<comment type="function">
    <text evidence="1">Bidirectionally degrades single-stranded DNA into large acid-insoluble oligonucleotides, which are then degraded further into small acid-soluble oligonucleotides.</text>
</comment>
<comment type="catalytic activity">
    <reaction evidence="1">
        <text>Exonucleolytic cleavage in either 5'- to 3'- or 3'- to 5'-direction to yield nucleoside 5'-phosphates.</text>
        <dbReference type="EC" id="3.1.11.6"/>
    </reaction>
</comment>
<comment type="subunit">
    <text evidence="1">Heterooligomer composed of large and small subunits.</text>
</comment>
<comment type="subcellular location">
    <subcellularLocation>
        <location evidence="1">Cytoplasm</location>
    </subcellularLocation>
</comment>
<comment type="similarity">
    <text evidence="1">Belongs to the XseA family.</text>
</comment>
<protein>
    <recommendedName>
        <fullName evidence="1">Exodeoxyribonuclease 7 large subunit</fullName>
        <ecNumber evidence="1">3.1.11.6</ecNumber>
    </recommendedName>
    <alternativeName>
        <fullName evidence="1">Exodeoxyribonuclease VII large subunit</fullName>
        <shortName evidence="1">Exonuclease VII large subunit</shortName>
    </alternativeName>
</protein>
<proteinExistence type="inferred from homology"/>
<sequence length="444" mass="49534">MSELSPHSPFSVTELNRQVRRLLEVSFMQVWVTGEISNFSCPSSGHWYFSLKDDKAQVRCAMFRNRNMFVKQRPRDGEAVTLRAKVSLYEGRGEFQLIAESMELAGEGELRRAFEELKLKLSREGLFEESRKRPLPAMPKQVGVITSPTGAAVRDILTVLERRFPAIPVLLFPVPVQGKEAGPAIVAAIASANRLNCCDVLIVGRGGGSLEDLWAFNEEPVARAIAASAIPVVSAVGHETDITIADLVADLRAPTPSAAAEKVSPDQAEWKHRFLIYEQRLDAAAQRLLRQEGLRLNQLRGRLKHPGRRLQESAQRLDDLEVRLHRQAQNLLSVRRNQLTHLRDRLLASSPRQSLKNRYATVDALNHRLQTAVLSVLRHKSQHFAKLCGHMEAVSPIATLARGYAIVSDENGQIIRSEKEVRTGQKVKARLSDGEIHCEVVASV</sequence>
<organism>
    <name type="scientific">Hahella chejuensis (strain KCTC 2396)</name>
    <dbReference type="NCBI Taxonomy" id="349521"/>
    <lineage>
        <taxon>Bacteria</taxon>
        <taxon>Pseudomonadati</taxon>
        <taxon>Pseudomonadota</taxon>
        <taxon>Gammaproteobacteria</taxon>
        <taxon>Oceanospirillales</taxon>
        <taxon>Hahellaceae</taxon>
        <taxon>Hahella</taxon>
    </lineage>
</organism>
<feature type="chain" id="PRO_0000303789" description="Exodeoxyribonuclease 7 large subunit">
    <location>
        <begin position="1"/>
        <end position="444"/>
    </location>
</feature>
<name>EX7L_HAHCH</name>
<dbReference type="EC" id="3.1.11.6" evidence="1"/>
<dbReference type="EMBL" id="CP000155">
    <property type="protein sequence ID" value="ABC31633.1"/>
    <property type="molecule type" value="Genomic_DNA"/>
</dbReference>
<dbReference type="RefSeq" id="WP_011398698.1">
    <property type="nucleotide sequence ID" value="NC_007645.1"/>
</dbReference>
<dbReference type="SMR" id="Q2SCJ1"/>
<dbReference type="STRING" id="349521.HCH_04944"/>
<dbReference type="KEGG" id="hch:HCH_04944"/>
<dbReference type="eggNOG" id="COG1570">
    <property type="taxonomic scope" value="Bacteria"/>
</dbReference>
<dbReference type="HOGENOM" id="CLU_023625_3_1_6"/>
<dbReference type="OrthoDB" id="9802795at2"/>
<dbReference type="Proteomes" id="UP000000238">
    <property type="component" value="Chromosome"/>
</dbReference>
<dbReference type="GO" id="GO:0005737">
    <property type="term" value="C:cytoplasm"/>
    <property type="evidence" value="ECO:0007669"/>
    <property type="project" value="UniProtKB-SubCell"/>
</dbReference>
<dbReference type="GO" id="GO:0009318">
    <property type="term" value="C:exodeoxyribonuclease VII complex"/>
    <property type="evidence" value="ECO:0007669"/>
    <property type="project" value="InterPro"/>
</dbReference>
<dbReference type="GO" id="GO:0008855">
    <property type="term" value="F:exodeoxyribonuclease VII activity"/>
    <property type="evidence" value="ECO:0007669"/>
    <property type="project" value="UniProtKB-UniRule"/>
</dbReference>
<dbReference type="GO" id="GO:0003676">
    <property type="term" value="F:nucleic acid binding"/>
    <property type="evidence" value="ECO:0007669"/>
    <property type="project" value="InterPro"/>
</dbReference>
<dbReference type="GO" id="GO:0006308">
    <property type="term" value="P:DNA catabolic process"/>
    <property type="evidence" value="ECO:0007669"/>
    <property type="project" value="UniProtKB-UniRule"/>
</dbReference>
<dbReference type="CDD" id="cd04489">
    <property type="entry name" value="ExoVII_LU_OBF"/>
    <property type="match status" value="1"/>
</dbReference>
<dbReference type="HAMAP" id="MF_00378">
    <property type="entry name" value="Exonuc_7_L"/>
    <property type="match status" value="1"/>
</dbReference>
<dbReference type="InterPro" id="IPR003753">
    <property type="entry name" value="Exonuc_VII_L"/>
</dbReference>
<dbReference type="InterPro" id="IPR020579">
    <property type="entry name" value="Exonuc_VII_lsu_C"/>
</dbReference>
<dbReference type="InterPro" id="IPR025824">
    <property type="entry name" value="OB-fold_nuc-bd_dom"/>
</dbReference>
<dbReference type="NCBIfam" id="TIGR00237">
    <property type="entry name" value="xseA"/>
    <property type="match status" value="1"/>
</dbReference>
<dbReference type="PANTHER" id="PTHR30008">
    <property type="entry name" value="EXODEOXYRIBONUCLEASE 7 LARGE SUBUNIT"/>
    <property type="match status" value="1"/>
</dbReference>
<dbReference type="PANTHER" id="PTHR30008:SF0">
    <property type="entry name" value="EXODEOXYRIBONUCLEASE 7 LARGE SUBUNIT"/>
    <property type="match status" value="1"/>
</dbReference>
<dbReference type="Pfam" id="PF02601">
    <property type="entry name" value="Exonuc_VII_L"/>
    <property type="match status" value="1"/>
</dbReference>
<dbReference type="Pfam" id="PF13742">
    <property type="entry name" value="tRNA_anti_2"/>
    <property type="match status" value="1"/>
</dbReference>
<keyword id="KW-0963">Cytoplasm</keyword>
<keyword id="KW-0269">Exonuclease</keyword>
<keyword id="KW-0378">Hydrolase</keyword>
<keyword id="KW-0540">Nuclease</keyword>
<keyword id="KW-1185">Reference proteome</keyword>
<evidence type="ECO:0000255" key="1">
    <source>
        <dbReference type="HAMAP-Rule" id="MF_00378"/>
    </source>
</evidence>
<gene>
    <name evidence="1" type="primary">xseA</name>
    <name type="ordered locus">HCH_04944</name>
</gene>